<dbReference type="EMBL" id="CP000030">
    <property type="protein sequence ID" value="AAV86816.1"/>
    <property type="molecule type" value="Genomic_DNA"/>
</dbReference>
<dbReference type="RefSeq" id="WP_010265292.1">
    <property type="nucleotide sequence ID" value="NZ_AFMU01000034.1"/>
</dbReference>
<dbReference type="SMR" id="Q5PA64"/>
<dbReference type="GeneID" id="7397872"/>
<dbReference type="KEGG" id="ama:AM906"/>
<dbReference type="PATRIC" id="fig|320483.3.peg.783"/>
<dbReference type="HOGENOM" id="CLU_058591_0_2_5"/>
<dbReference type="GO" id="GO:0022627">
    <property type="term" value="C:cytosolic small ribosomal subunit"/>
    <property type="evidence" value="ECO:0007669"/>
    <property type="project" value="TreeGrafter"/>
</dbReference>
<dbReference type="GO" id="GO:0003729">
    <property type="term" value="F:mRNA binding"/>
    <property type="evidence" value="ECO:0007669"/>
    <property type="project" value="UniProtKB-UniRule"/>
</dbReference>
<dbReference type="GO" id="GO:0019843">
    <property type="term" value="F:rRNA binding"/>
    <property type="evidence" value="ECO:0007669"/>
    <property type="project" value="UniProtKB-UniRule"/>
</dbReference>
<dbReference type="GO" id="GO:0003735">
    <property type="term" value="F:structural constituent of ribosome"/>
    <property type="evidence" value="ECO:0007669"/>
    <property type="project" value="InterPro"/>
</dbReference>
<dbReference type="GO" id="GO:0006412">
    <property type="term" value="P:translation"/>
    <property type="evidence" value="ECO:0007669"/>
    <property type="project" value="UniProtKB-UniRule"/>
</dbReference>
<dbReference type="CDD" id="cd02412">
    <property type="entry name" value="KH-II_30S_S3"/>
    <property type="match status" value="1"/>
</dbReference>
<dbReference type="FunFam" id="3.30.300.20:FF:000001">
    <property type="entry name" value="30S ribosomal protein S3"/>
    <property type="match status" value="1"/>
</dbReference>
<dbReference type="Gene3D" id="3.30.300.20">
    <property type="match status" value="1"/>
</dbReference>
<dbReference type="Gene3D" id="3.30.1140.32">
    <property type="entry name" value="Ribosomal protein S3, C-terminal domain"/>
    <property type="match status" value="1"/>
</dbReference>
<dbReference type="HAMAP" id="MF_01309_B">
    <property type="entry name" value="Ribosomal_uS3_B"/>
    <property type="match status" value="1"/>
</dbReference>
<dbReference type="InterPro" id="IPR004087">
    <property type="entry name" value="KH_dom"/>
</dbReference>
<dbReference type="InterPro" id="IPR015946">
    <property type="entry name" value="KH_dom-like_a/b"/>
</dbReference>
<dbReference type="InterPro" id="IPR004044">
    <property type="entry name" value="KH_dom_type_2"/>
</dbReference>
<dbReference type="InterPro" id="IPR009019">
    <property type="entry name" value="KH_sf_prok-type"/>
</dbReference>
<dbReference type="InterPro" id="IPR036419">
    <property type="entry name" value="Ribosomal_S3_C_sf"/>
</dbReference>
<dbReference type="InterPro" id="IPR005704">
    <property type="entry name" value="Ribosomal_uS3_bac-typ"/>
</dbReference>
<dbReference type="InterPro" id="IPR001351">
    <property type="entry name" value="Ribosomal_uS3_C"/>
</dbReference>
<dbReference type="InterPro" id="IPR018280">
    <property type="entry name" value="Ribosomal_uS3_CS"/>
</dbReference>
<dbReference type="NCBIfam" id="TIGR01009">
    <property type="entry name" value="rpsC_bact"/>
    <property type="match status" value="1"/>
</dbReference>
<dbReference type="PANTHER" id="PTHR11760">
    <property type="entry name" value="30S/40S RIBOSOMAL PROTEIN S3"/>
    <property type="match status" value="1"/>
</dbReference>
<dbReference type="PANTHER" id="PTHR11760:SF19">
    <property type="entry name" value="SMALL RIBOSOMAL SUBUNIT PROTEIN US3C"/>
    <property type="match status" value="1"/>
</dbReference>
<dbReference type="Pfam" id="PF07650">
    <property type="entry name" value="KH_2"/>
    <property type="match status" value="1"/>
</dbReference>
<dbReference type="Pfam" id="PF00189">
    <property type="entry name" value="Ribosomal_S3_C"/>
    <property type="match status" value="1"/>
</dbReference>
<dbReference type="SMART" id="SM00322">
    <property type="entry name" value="KH"/>
    <property type="match status" value="1"/>
</dbReference>
<dbReference type="SUPFAM" id="SSF54814">
    <property type="entry name" value="Prokaryotic type KH domain (KH-domain type II)"/>
    <property type="match status" value="1"/>
</dbReference>
<dbReference type="SUPFAM" id="SSF54821">
    <property type="entry name" value="Ribosomal protein S3 C-terminal domain"/>
    <property type="match status" value="1"/>
</dbReference>
<dbReference type="PROSITE" id="PS50823">
    <property type="entry name" value="KH_TYPE_2"/>
    <property type="match status" value="1"/>
</dbReference>
<dbReference type="PROSITE" id="PS00548">
    <property type="entry name" value="RIBOSOMAL_S3"/>
    <property type="match status" value="1"/>
</dbReference>
<sequence length="211" mass="23200">MGQKSNPIGLRLGIVGTWDSLWYAGGGYASKLHEDLLLRSFVKKTFHHAAVSRVVIARKVDAVIINIHSARPGVIIGKKGTDIDRVKQKIAQMVNHDVELHIVEVKKPDLKAALIAENIAQQLEKRVSFRRAMKRGVQNCLKLGARGVKVSCSGRLGGAEIARTEWYKEGSVPLHTFRANIDYSCAEAKTIYGIVGVKVWVYVGDSRTGGE</sequence>
<name>RS3_ANAMM</name>
<protein>
    <recommendedName>
        <fullName evidence="1">Small ribosomal subunit protein uS3</fullName>
    </recommendedName>
    <alternativeName>
        <fullName evidence="2">30S ribosomal protein S3</fullName>
    </alternativeName>
</protein>
<comment type="function">
    <text evidence="1">Binds the lower part of the 30S subunit head. Binds mRNA in the 70S ribosome, positioning it for translation.</text>
</comment>
<comment type="subunit">
    <text evidence="1">Part of the 30S ribosomal subunit. Forms a tight complex with proteins S10 and S14.</text>
</comment>
<comment type="similarity">
    <text evidence="1">Belongs to the universal ribosomal protein uS3 family.</text>
</comment>
<keyword id="KW-0687">Ribonucleoprotein</keyword>
<keyword id="KW-0689">Ribosomal protein</keyword>
<keyword id="KW-0694">RNA-binding</keyword>
<keyword id="KW-0699">rRNA-binding</keyword>
<accession>Q5PA64</accession>
<evidence type="ECO:0000255" key="1">
    <source>
        <dbReference type="HAMAP-Rule" id="MF_01309"/>
    </source>
</evidence>
<evidence type="ECO:0000305" key="2"/>
<feature type="chain" id="PRO_0000230677" description="Small ribosomal subunit protein uS3">
    <location>
        <begin position="1"/>
        <end position="211"/>
    </location>
</feature>
<feature type="domain" description="KH type-2" evidence="1">
    <location>
        <begin position="38"/>
        <end position="106"/>
    </location>
</feature>
<reference key="1">
    <citation type="journal article" date="2005" name="Proc. Natl. Acad. Sci. U.S.A.">
        <title>Complete genome sequencing of Anaplasma marginale reveals that the surface is skewed to two superfamilies of outer membrane proteins.</title>
        <authorList>
            <person name="Brayton K.A."/>
            <person name="Kappmeyer L.S."/>
            <person name="Herndon D.R."/>
            <person name="Dark M.J."/>
            <person name="Tibbals D.L."/>
            <person name="Palmer G.H."/>
            <person name="McGuire T.C."/>
            <person name="Knowles D.P. Jr."/>
        </authorList>
    </citation>
    <scope>NUCLEOTIDE SEQUENCE [LARGE SCALE GENOMIC DNA]</scope>
    <source>
        <strain>St. Maries</strain>
    </source>
</reference>
<organism>
    <name type="scientific">Anaplasma marginale (strain St. Maries)</name>
    <dbReference type="NCBI Taxonomy" id="234826"/>
    <lineage>
        <taxon>Bacteria</taxon>
        <taxon>Pseudomonadati</taxon>
        <taxon>Pseudomonadota</taxon>
        <taxon>Alphaproteobacteria</taxon>
        <taxon>Rickettsiales</taxon>
        <taxon>Anaplasmataceae</taxon>
        <taxon>Anaplasma</taxon>
    </lineage>
</organism>
<gene>
    <name evidence="1" type="primary">rpsC</name>
    <name type="ordered locus">AM906</name>
</gene>
<proteinExistence type="inferred from homology"/>